<evidence type="ECO:0000250" key="1"/>
<evidence type="ECO:0000250" key="2">
    <source>
        <dbReference type="UniProtKB" id="P16287"/>
    </source>
</evidence>
<evidence type="ECO:0000250" key="3">
    <source>
        <dbReference type="UniProtKB" id="P25224"/>
    </source>
</evidence>
<evidence type="ECO:0000255" key="4"/>
<evidence type="ECO:0000305" key="5"/>
<accession>P08671</accession>
<dbReference type="EMBL" id="M13215">
    <property type="protein sequence ID" value="AAA47217.1"/>
    <property type="molecule type" value="Genomic_RNA"/>
</dbReference>
<dbReference type="PIR" id="A26275">
    <property type="entry name" value="MFVNRV"/>
</dbReference>
<dbReference type="RefSeq" id="NP_056795.1">
    <property type="nucleotide sequence ID" value="NC_001542.1"/>
</dbReference>
<dbReference type="SMR" id="P08671"/>
<dbReference type="IntAct" id="P08671">
    <property type="interactions" value="5"/>
</dbReference>
<dbReference type="DrugBank" id="DB11603">
    <property type="generic name" value="Rabies immune globulin, human"/>
</dbReference>
<dbReference type="DNASU" id="1489855"/>
<dbReference type="KEGG" id="vg:1489855"/>
<dbReference type="Proteomes" id="UP000008649">
    <property type="component" value="Segment"/>
</dbReference>
<dbReference type="GO" id="GO:0030430">
    <property type="term" value="C:host cell cytoplasm"/>
    <property type="evidence" value="ECO:0007669"/>
    <property type="project" value="UniProtKB-SubCell"/>
</dbReference>
<dbReference type="GO" id="GO:0033645">
    <property type="term" value="C:host cell endomembrane system"/>
    <property type="evidence" value="ECO:0007669"/>
    <property type="project" value="UniProtKB-SubCell"/>
</dbReference>
<dbReference type="GO" id="GO:0016020">
    <property type="term" value="C:membrane"/>
    <property type="evidence" value="ECO:0007669"/>
    <property type="project" value="UniProtKB-KW"/>
</dbReference>
<dbReference type="GO" id="GO:0019031">
    <property type="term" value="C:viral envelope"/>
    <property type="evidence" value="ECO:0007669"/>
    <property type="project" value="UniProtKB-KW"/>
</dbReference>
<dbReference type="GO" id="GO:0055036">
    <property type="term" value="C:virion membrane"/>
    <property type="evidence" value="ECO:0007669"/>
    <property type="project" value="UniProtKB-SubCell"/>
</dbReference>
<dbReference type="GO" id="GO:0039660">
    <property type="term" value="F:structural constituent of virion"/>
    <property type="evidence" value="ECO:0007669"/>
    <property type="project" value="UniProtKB-KW"/>
</dbReference>
<dbReference type="GO" id="GO:0039702">
    <property type="term" value="P:viral budding via host ESCRT complex"/>
    <property type="evidence" value="ECO:0007669"/>
    <property type="project" value="UniProtKB-KW"/>
</dbReference>
<dbReference type="Gene3D" id="3.10.460.20">
    <property type="entry name" value="Rhabdovirus matrix protein M2"/>
    <property type="match status" value="1"/>
</dbReference>
<dbReference type="InterPro" id="IPR006870">
    <property type="entry name" value="Rhabdo_M"/>
</dbReference>
<dbReference type="InterPro" id="IPR038617">
    <property type="entry name" value="Rhabdovirus_M_sf"/>
</dbReference>
<dbReference type="Pfam" id="PF04785">
    <property type="entry name" value="Rhabdo_M2"/>
    <property type="match status" value="1"/>
</dbReference>
<organismHost>
    <name type="scientific">Homo sapiens</name>
    <name type="common">Human</name>
    <dbReference type="NCBI Taxonomy" id="9606"/>
</organismHost>
<organismHost>
    <name type="scientific">Mammalia</name>
    <dbReference type="NCBI Taxonomy" id="40674"/>
</organismHost>
<proteinExistence type="inferred from homology"/>
<gene>
    <name type="primary">M</name>
</gene>
<feature type="chain" id="PRO_0000222850" description="Matrix protein">
    <location>
        <begin position="1"/>
        <end position="202"/>
    </location>
</feature>
<feature type="region of interest" description="Essential for glycoprotein binding" evidence="1">
    <location>
        <begin position="115"/>
        <end position="151"/>
    </location>
</feature>
<feature type="short sequence motif" description="PPXY motif" evidence="4">
    <location>
        <begin position="35"/>
        <end position="38"/>
    </location>
</feature>
<feature type="site" description="Involved in the inhibition of stress granules formation and contributes therefore to virulence" evidence="3">
    <location>
        <position position="95"/>
    </location>
</feature>
<organism>
    <name type="scientific">Rabies virus (strain Pasteur vaccins / PV)</name>
    <name type="common">RABV</name>
    <dbReference type="NCBI Taxonomy" id="103929"/>
    <lineage>
        <taxon>Viruses</taxon>
        <taxon>Riboviria</taxon>
        <taxon>Orthornavirae</taxon>
        <taxon>Negarnaviricota</taxon>
        <taxon>Haploviricotina</taxon>
        <taxon>Monjiviricetes</taxon>
        <taxon>Mononegavirales</taxon>
        <taxon>Rhabdoviridae</taxon>
        <taxon>Alpharhabdovirinae</taxon>
        <taxon>Lyssavirus</taxon>
        <taxon>Lyssavirus rabies</taxon>
    </lineage>
</organism>
<keyword id="KW-0053">Apoptosis</keyword>
<keyword id="KW-1035">Host cytoplasm</keyword>
<keyword id="KW-1043">Host membrane</keyword>
<keyword id="KW-0945">Host-virus interaction</keyword>
<keyword id="KW-0472">Membrane</keyword>
<keyword id="KW-1185">Reference proteome</keyword>
<keyword id="KW-1198">Viral budding</keyword>
<keyword id="KW-1187">Viral budding via the host ESCRT complexes</keyword>
<keyword id="KW-0261">Viral envelope protein</keyword>
<keyword id="KW-0468">Viral matrix protein</keyword>
<keyword id="KW-1188">Viral release from host cell</keyword>
<keyword id="KW-0946">Virion</keyword>
<protein>
    <recommendedName>
        <fullName>Matrix protein</fullName>
    </recommendedName>
    <alternativeName>
        <fullName>Phosphoprotein M2</fullName>
    </alternativeName>
</protein>
<reference key="1">
    <citation type="journal article" date="1986" name="Proc. Natl. Acad. Sci. U.S.A.">
        <title>Walking along the rabies genome: is the large G-L intergenic region a remnant gene?</title>
        <authorList>
            <person name="Tordo N."/>
            <person name="Poch O."/>
            <person name="Ermine A."/>
            <person name="Keith G."/>
            <person name="Rougeon F."/>
        </authorList>
    </citation>
    <scope>NUCLEOTIDE SEQUENCE [GENOMIC RNA]</scope>
</reference>
<name>MATRX_RABVP</name>
<comment type="function">
    <text evidence="2 3">Plays a major role in assembly, budding and uncoating of virion after membrane fusion. Completely covers the ribonucleoprotein coil and keep it in condensed bullet-shaped form. Inhibits viral transcription and stimulates replication. Plays a major role in early induction of TRAIL-mediated apoptosis in infected neurons (By similarity). Inhibits the integrated stress response (ISR) in the infected cell by blocking the formation of stress granules (By similarity).</text>
</comment>
<comment type="subunit">
    <text evidence="2">Homomultimer. Interacts with nucleoprotein and with the cytoplasmic domain of glycoprotein. Interacts with host ATP6V1A; this interaction plays an important role in virion uncoating after viral entry.</text>
</comment>
<comment type="subcellular location">
    <subcellularLocation>
        <location evidence="2">Virion membrane</location>
        <topology evidence="2">Peripheral membrane protein</topology>
    </subcellularLocation>
    <subcellularLocation>
        <location evidence="2">Host endomembrane system</location>
        <topology evidence="2">Peripheral membrane protein</topology>
    </subcellularLocation>
    <subcellularLocation>
        <location evidence="2">Host cytoplasm</location>
    </subcellularLocation>
</comment>
<comment type="domain">
    <text evidence="5">Late-budding domains (L domains) are short sequence motifs essential for viral particle budding. They recruit proteins of the host ESCRT machinery (Endosomal Sorting Complex Required for Transport) or ESCRT-associated proteins. Matrix protein contains one L domain: a PPXY motif which potentially interacts with the WW domain 3 of NEDD4 E3 ubiquitin ligase (Potential).</text>
</comment>
<comment type="miscellaneous">
    <text evidence="1">Most abundant protein in the virion.</text>
</comment>
<comment type="similarity">
    <text evidence="5">Belongs to the lyssavirus matrix protein family.</text>
</comment>
<sequence>MNFLRKIVKNCRDEDTQKPSPVSAPLDDDDLWLPPPEYVPLKELTSKKNRRNFCINGGVKVCSPNGYSFGILRHILRSFDEIYSGNHRMVGLVKVVIGLALSGAPVPEGMNWVYKLRRTLIFQWADSRGPLEGEELEYSQEITWDDNTEFVGLQIRVSAKQCHIRGRIWCINMNSRAGQLWSDMSLQTQRSEEDKDSSLLLE</sequence>